<evidence type="ECO:0000250" key="1">
    <source>
        <dbReference type="UniProtKB" id="A6QDA0"/>
    </source>
</evidence>
<evidence type="ECO:0000250" key="2">
    <source>
        <dbReference type="UniProtKB" id="Q2G1N3"/>
    </source>
</evidence>
<evidence type="ECO:0000305" key="3"/>
<gene>
    <name type="primary">sbnA</name>
    <name type="ordered locus">SAR0119</name>
</gene>
<feature type="chain" id="PRO_0000395017" description="N-(2-amino-2-carboxyethyl)-L-glutamate synthase">
    <location>
        <begin position="1"/>
        <end position="326"/>
    </location>
</feature>
<feature type="binding site" evidence="1">
    <location>
        <position position="77"/>
    </location>
    <ligand>
        <name>pyridoxal 5'-phosphate</name>
        <dbReference type="ChEBI" id="CHEBI:597326"/>
    </ligand>
</feature>
<feature type="binding site" evidence="1">
    <location>
        <begin position="185"/>
        <end position="189"/>
    </location>
    <ligand>
        <name>pyridoxal 5'-phosphate</name>
        <dbReference type="ChEBI" id="CHEBI:597326"/>
    </ligand>
</feature>
<feature type="binding site" evidence="1">
    <location>
        <position position="272"/>
    </location>
    <ligand>
        <name>pyridoxal 5'-phosphate</name>
        <dbReference type="ChEBI" id="CHEBI:597326"/>
    </ligand>
</feature>
<feature type="modified residue" description="N6-(pyridoxal phosphate)lysine" evidence="1">
    <location>
        <position position="47"/>
    </location>
</feature>
<comment type="function">
    <text evidence="1">Catalyzes the synthesis of N-((2S)-2-amino-2-carboxyethyl)-L-glutamate (ACEGA) from O-phospho-L-serine and L-glutamate. Involved in the biosynthesis of L-2,3-diaminopropionic acid (L-Dap), a precursor of staphyloferrin B and antibiotics.</text>
</comment>
<comment type="catalytic activity">
    <reaction evidence="1">
        <text>O-phospho-L-serine + L-glutamate = N-[(2S)-2-amino-2-carboxyethyl]-L-glutamate + phosphate + H(+)</text>
        <dbReference type="Rhea" id="RHEA:52384"/>
        <dbReference type="ChEBI" id="CHEBI:15378"/>
        <dbReference type="ChEBI" id="CHEBI:29985"/>
        <dbReference type="ChEBI" id="CHEBI:43474"/>
        <dbReference type="ChEBI" id="CHEBI:57524"/>
        <dbReference type="ChEBI" id="CHEBI:134610"/>
        <dbReference type="EC" id="2.5.1.140"/>
    </reaction>
</comment>
<comment type="cofactor">
    <cofactor evidence="1">
        <name>pyridoxal 5'-phosphate</name>
        <dbReference type="ChEBI" id="CHEBI:597326"/>
    </cofactor>
</comment>
<comment type="pathway">
    <text evidence="1">Siderophore biosynthesis.</text>
</comment>
<comment type="subunit">
    <text evidence="1">Homodimer.</text>
</comment>
<comment type="induction">
    <text evidence="2">Up-regulated under iron-deficient growth conditions. Repressed by Fur under iron-rich growth conditions.</text>
</comment>
<comment type="similarity">
    <text evidence="3">Belongs to the cysteine synthase/cystathionine beta-synthase family. SbnA subfamily.</text>
</comment>
<proteinExistence type="inferred from homology"/>
<sequence length="326" mass="35897">MIEKSQACHDSLLDSVGQTPMVQLHQLFPKHEVFAKLEYMNPGGSMKDRPAKYIIEHGIKHGLITENTHLIESTSGNLGIALAMIAKIKGLKLTCVVDPKISPTNLKIIKSYGANVEMVEEPDAHGGYLMTRIAKVQELLATIDDAYWINQYANELNWQSHYHGAGTEIVETIKQPIDYFVAPVSTTGSIMGMSRKIKEVHPNAQIVAVDAKGSVIFGDKPINRELPGIGASRVPEILNRSEINQVIHVDDYQSALGCRKLIDYEGIFAGGSTGSIIAAIEQLITSIEEGATIVTILPDRGDRYLDLVYSDTWLEKMKSRQGVKSE</sequence>
<name>SBNA_STAAR</name>
<organism>
    <name type="scientific">Staphylococcus aureus (strain MRSA252)</name>
    <dbReference type="NCBI Taxonomy" id="282458"/>
    <lineage>
        <taxon>Bacteria</taxon>
        <taxon>Bacillati</taxon>
        <taxon>Bacillota</taxon>
        <taxon>Bacilli</taxon>
        <taxon>Bacillales</taxon>
        <taxon>Staphylococcaceae</taxon>
        <taxon>Staphylococcus</taxon>
    </lineage>
</organism>
<dbReference type="EC" id="2.5.1.140" evidence="1"/>
<dbReference type="EMBL" id="BX571856">
    <property type="protein sequence ID" value="CAG39145.1"/>
    <property type="molecule type" value="Genomic_DNA"/>
</dbReference>
<dbReference type="RefSeq" id="WP_000570808.1">
    <property type="nucleotide sequence ID" value="NC_002952.2"/>
</dbReference>
<dbReference type="SMR" id="Q6GKI9"/>
<dbReference type="KEGG" id="sar:SAR0119"/>
<dbReference type="HOGENOM" id="CLU_021018_1_0_9"/>
<dbReference type="Proteomes" id="UP000000596">
    <property type="component" value="Chromosome"/>
</dbReference>
<dbReference type="GO" id="GO:0016765">
    <property type="term" value="F:transferase activity, transferring alkyl or aryl (other than methyl) groups"/>
    <property type="evidence" value="ECO:0007669"/>
    <property type="project" value="UniProtKB-ARBA"/>
</dbReference>
<dbReference type="GO" id="GO:0006535">
    <property type="term" value="P:cysteine biosynthetic process from serine"/>
    <property type="evidence" value="ECO:0007669"/>
    <property type="project" value="InterPro"/>
</dbReference>
<dbReference type="CDD" id="cd01561">
    <property type="entry name" value="CBS_like"/>
    <property type="match status" value="1"/>
</dbReference>
<dbReference type="Gene3D" id="3.40.50.1100">
    <property type="match status" value="2"/>
</dbReference>
<dbReference type="InterPro" id="IPR050214">
    <property type="entry name" value="Cys_Synth/Cystath_Beta-Synth"/>
</dbReference>
<dbReference type="InterPro" id="IPR001216">
    <property type="entry name" value="P-phosphate_BS"/>
</dbReference>
<dbReference type="InterPro" id="IPR023927">
    <property type="entry name" value="SbnA"/>
</dbReference>
<dbReference type="InterPro" id="IPR001926">
    <property type="entry name" value="TrpB-like_PALP"/>
</dbReference>
<dbReference type="InterPro" id="IPR036052">
    <property type="entry name" value="TrpB-like_PALP_sf"/>
</dbReference>
<dbReference type="NCBIfam" id="TIGR03945">
    <property type="entry name" value="PLP_SbnA_fam"/>
    <property type="match status" value="1"/>
</dbReference>
<dbReference type="PANTHER" id="PTHR10314">
    <property type="entry name" value="CYSTATHIONINE BETA-SYNTHASE"/>
    <property type="match status" value="1"/>
</dbReference>
<dbReference type="Pfam" id="PF00291">
    <property type="entry name" value="PALP"/>
    <property type="match status" value="1"/>
</dbReference>
<dbReference type="SUPFAM" id="SSF53686">
    <property type="entry name" value="Tryptophan synthase beta subunit-like PLP-dependent enzymes"/>
    <property type="match status" value="1"/>
</dbReference>
<dbReference type="PROSITE" id="PS00901">
    <property type="entry name" value="CYS_SYNTHASE"/>
    <property type="match status" value="1"/>
</dbReference>
<protein>
    <recommendedName>
        <fullName evidence="3">N-(2-amino-2-carboxyethyl)-L-glutamate synthase</fullName>
        <shortName evidence="3">ACEGA synthase</shortName>
        <ecNumber evidence="1">2.5.1.140</ecNumber>
    </recommendedName>
</protein>
<accession>Q6GKI9</accession>
<reference key="1">
    <citation type="journal article" date="2004" name="Proc. Natl. Acad. Sci. U.S.A.">
        <title>Complete genomes of two clinical Staphylococcus aureus strains: evidence for the rapid evolution of virulence and drug resistance.</title>
        <authorList>
            <person name="Holden M.T.G."/>
            <person name="Feil E.J."/>
            <person name="Lindsay J.A."/>
            <person name="Peacock S.J."/>
            <person name="Day N.P.J."/>
            <person name="Enright M.C."/>
            <person name="Foster T.J."/>
            <person name="Moore C.E."/>
            <person name="Hurst L."/>
            <person name="Atkin R."/>
            <person name="Barron A."/>
            <person name="Bason N."/>
            <person name="Bentley S.D."/>
            <person name="Chillingworth C."/>
            <person name="Chillingworth T."/>
            <person name="Churcher C."/>
            <person name="Clark L."/>
            <person name="Corton C."/>
            <person name="Cronin A."/>
            <person name="Doggett J."/>
            <person name="Dowd L."/>
            <person name="Feltwell T."/>
            <person name="Hance Z."/>
            <person name="Harris B."/>
            <person name="Hauser H."/>
            <person name="Holroyd S."/>
            <person name="Jagels K."/>
            <person name="James K.D."/>
            <person name="Lennard N."/>
            <person name="Line A."/>
            <person name="Mayes R."/>
            <person name="Moule S."/>
            <person name="Mungall K."/>
            <person name="Ormond D."/>
            <person name="Quail M.A."/>
            <person name="Rabbinowitsch E."/>
            <person name="Rutherford K.M."/>
            <person name="Sanders M."/>
            <person name="Sharp S."/>
            <person name="Simmonds M."/>
            <person name="Stevens K."/>
            <person name="Whitehead S."/>
            <person name="Barrell B.G."/>
            <person name="Spratt B.G."/>
            <person name="Parkhill J."/>
        </authorList>
    </citation>
    <scope>NUCLEOTIDE SEQUENCE [LARGE SCALE GENOMIC DNA]</scope>
    <source>
        <strain>MRSA252</strain>
    </source>
</reference>
<keyword id="KW-0663">Pyridoxal phosphate</keyword>
<keyword id="KW-0808">Transferase</keyword>